<protein>
    <recommendedName>
        <fullName evidence="1">Uroporphyrinogen decarboxylase</fullName>
        <shortName evidence="1">UPD</shortName>
        <shortName evidence="1">URO-D</shortName>
        <ecNumber evidence="1">4.1.1.37</ecNumber>
    </recommendedName>
</protein>
<organism>
    <name type="scientific">Neisseria meningitidis serogroup A / serotype 4A (strain DSM 15465 / Z2491)</name>
    <dbReference type="NCBI Taxonomy" id="122587"/>
    <lineage>
        <taxon>Bacteria</taxon>
        <taxon>Pseudomonadati</taxon>
        <taxon>Pseudomonadota</taxon>
        <taxon>Betaproteobacteria</taxon>
        <taxon>Neisseriales</taxon>
        <taxon>Neisseriaceae</taxon>
        <taxon>Neisseria</taxon>
    </lineage>
</organism>
<proteinExistence type="inferred from homology"/>
<accession>Q9JV52</accession>
<accession>A1IR30</accession>
<feature type="chain" id="PRO_0000187617" description="Uroporphyrinogen decarboxylase">
    <location>
        <begin position="1"/>
        <end position="354"/>
    </location>
</feature>
<feature type="binding site" evidence="1">
    <location>
        <begin position="27"/>
        <end position="31"/>
    </location>
    <ligand>
        <name>substrate</name>
    </ligand>
</feature>
<feature type="binding site" evidence="1">
    <location>
        <position position="46"/>
    </location>
    <ligand>
        <name>substrate</name>
    </ligand>
</feature>
<feature type="binding site" evidence="1">
    <location>
        <position position="77"/>
    </location>
    <ligand>
        <name>substrate</name>
    </ligand>
</feature>
<feature type="binding site" evidence="1">
    <location>
        <position position="153"/>
    </location>
    <ligand>
        <name>substrate</name>
    </ligand>
</feature>
<feature type="binding site" evidence="1">
    <location>
        <position position="208"/>
    </location>
    <ligand>
        <name>substrate</name>
    </ligand>
</feature>
<feature type="binding site" evidence="1">
    <location>
        <position position="326"/>
    </location>
    <ligand>
        <name>substrate</name>
    </ligand>
</feature>
<feature type="site" description="Transition state stabilizer" evidence="1">
    <location>
        <position position="77"/>
    </location>
</feature>
<reference key="1">
    <citation type="journal article" date="2000" name="Nature">
        <title>Complete DNA sequence of a serogroup A strain of Neisseria meningitidis Z2491.</title>
        <authorList>
            <person name="Parkhill J."/>
            <person name="Achtman M."/>
            <person name="James K.D."/>
            <person name="Bentley S.D."/>
            <person name="Churcher C.M."/>
            <person name="Klee S.R."/>
            <person name="Morelli G."/>
            <person name="Basham D."/>
            <person name="Brown D."/>
            <person name="Chillingworth T."/>
            <person name="Davies R.M."/>
            <person name="Davis P."/>
            <person name="Devlin K."/>
            <person name="Feltwell T."/>
            <person name="Hamlin N."/>
            <person name="Holroyd S."/>
            <person name="Jagels K."/>
            <person name="Leather S."/>
            <person name="Moule S."/>
            <person name="Mungall K.L."/>
            <person name="Quail M.A."/>
            <person name="Rajandream M.A."/>
            <person name="Rutherford K.M."/>
            <person name="Simmonds M."/>
            <person name="Skelton J."/>
            <person name="Whitehead S."/>
            <person name="Spratt B.G."/>
            <person name="Barrell B.G."/>
        </authorList>
    </citation>
    <scope>NUCLEOTIDE SEQUENCE [LARGE SCALE GENOMIC DNA]</scope>
    <source>
        <strain>DSM 15465 / Z2491</strain>
    </source>
</reference>
<keyword id="KW-0963">Cytoplasm</keyword>
<keyword id="KW-0210">Decarboxylase</keyword>
<keyword id="KW-0456">Lyase</keyword>
<keyword id="KW-0627">Porphyrin biosynthesis</keyword>
<name>DCUP_NEIMA</name>
<dbReference type="EC" id="4.1.1.37" evidence="1"/>
<dbReference type="EMBL" id="AL157959">
    <property type="protein sequence ID" value="CAM08214.1"/>
    <property type="molecule type" value="Genomic_DNA"/>
</dbReference>
<dbReference type="PIR" id="F81946">
    <property type="entry name" value="F81946"/>
</dbReference>
<dbReference type="RefSeq" id="WP_002246094.1">
    <property type="nucleotide sequence ID" value="NC_003116.1"/>
</dbReference>
<dbReference type="SMR" id="Q9JV52"/>
<dbReference type="EnsemblBacteria" id="CAM08214">
    <property type="protein sequence ID" value="CAM08214"/>
    <property type="gene ID" value="NMA0991"/>
</dbReference>
<dbReference type="GeneID" id="93386391"/>
<dbReference type="KEGG" id="nma:NMA0991"/>
<dbReference type="HOGENOM" id="CLU_040933_0_0_4"/>
<dbReference type="UniPathway" id="UPA00251">
    <property type="reaction ID" value="UER00321"/>
</dbReference>
<dbReference type="Proteomes" id="UP000000626">
    <property type="component" value="Chromosome"/>
</dbReference>
<dbReference type="GO" id="GO:0005829">
    <property type="term" value="C:cytosol"/>
    <property type="evidence" value="ECO:0007669"/>
    <property type="project" value="TreeGrafter"/>
</dbReference>
<dbReference type="GO" id="GO:0004853">
    <property type="term" value="F:uroporphyrinogen decarboxylase activity"/>
    <property type="evidence" value="ECO:0007669"/>
    <property type="project" value="UniProtKB-UniRule"/>
</dbReference>
<dbReference type="GO" id="GO:0019353">
    <property type="term" value="P:protoporphyrinogen IX biosynthetic process from glutamate"/>
    <property type="evidence" value="ECO:0007669"/>
    <property type="project" value="TreeGrafter"/>
</dbReference>
<dbReference type="CDD" id="cd00717">
    <property type="entry name" value="URO-D"/>
    <property type="match status" value="1"/>
</dbReference>
<dbReference type="FunFam" id="3.20.20.210:FF:000001">
    <property type="entry name" value="Uroporphyrinogen decarboxylase"/>
    <property type="match status" value="1"/>
</dbReference>
<dbReference type="Gene3D" id="3.20.20.210">
    <property type="match status" value="1"/>
</dbReference>
<dbReference type="HAMAP" id="MF_00218">
    <property type="entry name" value="URO_D"/>
    <property type="match status" value="1"/>
</dbReference>
<dbReference type="InterPro" id="IPR038071">
    <property type="entry name" value="UROD/MetE-like_sf"/>
</dbReference>
<dbReference type="InterPro" id="IPR006361">
    <property type="entry name" value="Uroporphyrinogen_deCO2ase_HemE"/>
</dbReference>
<dbReference type="InterPro" id="IPR000257">
    <property type="entry name" value="Uroporphyrinogen_deCOase"/>
</dbReference>
<dbReference type="NCBIfam" id="TIGR01464">
    <property type="entry name" value="hemE"/>
    <property type="match status" value="1"/>
</dbReference>
<dbReference type="PANTHER" id="PTHR21091">
    <property type="entry name" value="METHYLTETRAHYDROFOLATE:HOMOCYSTEINE METHYLTRANSFERASE RELATED"/>
    <property type="match status" value="1"/>
</dbReference>
<dbReference type="PANTHER" id="PTHR21091:SF169">
    <property type="entry name" value="UROPORPHYRINOGEN DECARBOXYLASE"/>
    <property type="match status" value="1"/>
</dbReference>
<dbReference type="Pfam" id="PF01208">
    <property type="entry name" value="URO-D"/>
    <property type="match status" value="1"/>
</dbReference>
<dbReference type="SUPFAM" id="SSF51726">
    <property type="entry name" value="UROD/MetE-like"/>
    <property type="match status" value="1"/>
</dbReference>
<dbReference type="PROSITE" id="PS00906">
    <property type="entry name" value="UROD_1"/>
    <property type="match status" value="1"/>
</dbReference>
<dbReference type="PROSITE" id="PS00907">
    <property type="entry name" value="UROD_2"/>
    <property type="match status" value="1"/>
</dbReference>
<evidence type="ECO:0000255" key="1">
    <source>
        <dbReference type="HAMAP-Rule" id="MF_00218"/>
    </source>
</evidence>
<gene>
    <name evidence="1" type="primary">hemE</name>
    <name type="ordered locus">NMA0991</name>
</gene>
<comment type="function">
    <text evidence="1">Catalyzes the decarboxylation of four acetate groups of uroporphyrinogen-III to yield coproporphyrinogen-III.</text>
</comment>
<comment type="catalytic activity">
    <reaction evidence="1">
        <text>uroporphyrinogen III + 4 H(+) = coproporphyrinogen III + 4 CO2</text>
        <dbReference type="Rhea" id="RHEA:19865"/>
        <dbReference type="ChEBI" id="CHEBI:15378"/>
        <dbReference type="ChEBI" id="CHEBI:16526"/>
        <dbReference type="ChEBI" id="CHEBI:57308"/>
        <dbReference type="ChEBI" id="CHEBI:57309"/>
        <dbReference type="EC" id="4.1.1.37"/>
    </reaction>
</comment>
<comment type="pathway">
    <text evidence="1">Porphyrin-containing compound metabolism; protoporphyrin-IX biosynthesis; coproporphyrinogen-III from 5-aminolevulinate: step 4/4.</text>
</comment>
<comment type="subunit">
    <text evidence="1">Homodimer.</text>
</comment>
<comment type="subcellular location">
    <subcellularLocation>
        <location evidence="1">Cytoplasm</location>
    </subcellularLocation>
</comment>
<comment type="similarity">
    <text evidence="1">Belongs to the uroporphyrinogen decarboxylase family.</text>
</comment>
<sequence>MTLLKNDTFLRALLKQPVEYTPIWMMRQAGRYLPEYKATRAKAGSFLDLCKNTELATEVTIQPLERFDLDAAILFSDILTVPDAMGLGLYFAEGEGPKFKRALQHEDDIAKLHVPDMEKLQYVFDAVTSIRKALDGRVPLIGFSGSPFTLACYMVEGGSSKEFRTIKTMMYSRPDLLHKILDTNAQAVTAYLNAQIDAGAQAVQIFDTWGGVLSDAAFKEFSLKYIRQIVAGLKRESEGRRVPVIVFAKGGGLWLESMAQIGADALGLDWTCNIGEARRRVGKQVALQGNFDPFALFGTPESIRTEVARILADYGHGSGHVFNLGHGINQHADPEHAKILVDTVHELSRQYHGG</sequence>